<accession>B8GIC5</accession>
<comment type="function">
    <text evidence="1">Involved in the biosynthesis of branched-chain amino acids (BCAA). Catalyzes an alkyl-migration followed by a ketol-acid reduction of (S)-2-acetolactate (S2AL) to yield (R)-2,3-dihydroxy-isovalerate. In the isomerase reaction, S2AL is rearranged via a Mg-dependent methyl migration to produce 3-hydroxy-3-methyl-2-ketobutyrate (HMKB). In the reductase reaction, this 2-ketoacid undergoes a metal-dependent reduction by NADPH to yield (R)-2,3-dihydroxy-isovalerate.</text>
</comment>
<comment type="catalytic activity">
    <reaction evidence="1">
        <text>(2R)-2,3-dihydroxy-3-methylbutanoate + NADP(+) = (2S)-2-acetolactate + NADPH + H(+)</text>
        <dbReference type="Rhea" id="RHEA:22068"/>
        <dbReference type="ChEBI" id="CHEBI:15378"/>
        <dbReference type="ChEBI" id="CHEBI:49072"/>
        <dbReference type="ChEBI" id="CHEBI:57783"/>
        <dbReference type="ChEBI" id="CHEBI:58349"/>
        <dbReference type="ChEBI" id="CHEBI:58476"/>
        <dbReference type="EC" id="1.1.1.86"/>
    </reaction>
</comment>
<comment type="catalytic activity">
    <reaction evidence="1">
        <text>(2R,3R)-2,3-dihydroxy-3-methylpentanoate + NADP(+) = (S)-2-ethyl-2-hydroxy-3-oxobutanoate + NADPH + H(+)</text>
        <dbReference type="Rhea" id="RHEA:13493"/>
        <dbReference type="ChEBI" id="CHEBI:15378"/>
        <dbReference type="ChEBI" id="CHEBI:49256"/>
        <dbReference type="ChEBI" id="CHEBI:49258"/>
        <dbReference type="ChEBI" id="CHEBI:57783"/>
        <dbReference type="ChEBI" id="CHEBI:58349"/>
        <dbReference type="EC" id="1.1.1.86"/>
    </reaction>
</comment>
<comment type="cofactor">
    <cofactor evidence="1">
        <name>Mg(2+)</name>
        <dbReference type="ChEBI" id="CHEBI:18420"/>
    </cofactor>
    <text evidence="1">Binds 2 magnesium ions per subunit.</text>
</comment>
<comment type="pathway">
    <text evidence="1">Amino-acid biosynthesis; L-isoleucine biosynthesis; L-isoleucine from 2-oxobutanoate: step 2/4.</text>
</comment>
<comment type="pathway">
    <text evidence="1">Amino-acid biosynthesis; L-valine biosynthesis; L-valine from pyruvate: step 2/4.</text>
</comment>
<comment type="similarity">
    <text evidence="1">Belongs to the ketol-acid reductoisomerase family.</text>
</comment>
<sequence length="331" mass="36429">MIKKYYESDADLAAVQGKQIAVIGYGSQGRGQALNLRDSGLSVIIGLRPGRSFQQASEDGFEVFPVADAVKKADIIQILLPDESQGAVYKTEIRPYLADKKCLMFSHGFNIHYGQIVPPPNVDVVMVAPKGPGHMVRRTFEEGKGVPALIAIEQDYTGDAQAIALGYAKGIGATRAVVFETTFREETETDLFGEQAVLCGGVTSLIKAGFETLVDAGYAPEMAYLEVLHEMKLIVDMIYEGGFTNMRDSISNTALYGDLTRGPRVIGEDSRIAMEEILEEIQNGEFAREWMLENIVNRPVFTALKRNDEEHLLEEVGAEIRGLMPQFKKNA</sequence>
<proteinExistence type="inferred from homology"/>
<feature type="chain" id="PRO_1000191025" description="Ketol-acid reductoisomerase (NADP(+))">
    <location>
        <begin position="1"/>
        <end position="331"/>
    </location>
</feature>
<feature type="domain" description="KARI N-terminal Rossmann" evidence="2">
    <location>
        <begin position="2"/>
        <end position="181"/>
    </location>
</feature>
<feature type="domain" description="KARI C-terminal knotted" evidence="3">
    <location>
        <begin position="182"/>
        <end position="327"/>
    </location>
</feature>
<feature type="active site" evidence="1">
    <location>
        <position position="107"/>
    </location>
</feature>
<feature type="binding site" evidence="1">
    <location>
        <begin position="25"/>
        <end position="28"/>
    </location>
    <ligand>
        <name>NADP(+)</name>
        <dbReference type="ChEBI" id="CHEBI:58349"/>
    </ligand>
</feature>
<feature type="binding site" evidence="1">
    <location>
        <position position="48"/>
    </location>
    <ligand>
        <name>NADP(+)</name>
        <dbReference type="ChEBI" id="CHEBI:58349"/>
    </ligand>
</feature>
<feature type="binding site" evidence="1">
    <location>
        <position position="52"/>
    </location>
    <ligand>
        <name>NADP(+)</name>
        <dbReference type="ChEBI" id="CHEBI:58349"/>
    </ligand>
</feature>
<feature type="binding site" evidence="1">
    <location>
        <begin position="82"/>
        <end position="85"/>
    </location>
    <ligand>
        <name>NADP(+)</name>
        <dbReference type="ChEBI" id="CHEBI:58349"/>
    </ligand>
</feature>
<feature type="binding site" evidence="1">
    <location>
        <position position="133"/>
    </location>
    <ligand>
        <name>NADP(+)</name>
        <dbReference type="ChEBI" id="CHEBI:58349"/>
    </ligand>
</feature>
<feature type="binding site" evidence="1">
    <location>
        <position position="190"/>
    </location>
    <ligand>
        <name>Mg(2+)</name>
        <dbReference type="ChEBI" id="CHEBI:18420"/>
        <label>1</label>
    </ligand>
</feature>
<feature type="binding site" evidence="1">
    <location>
        <position position="190"/>
    </location>
    <ligand>
        <name>Mg(2+)</name>
        <dbReference type="ChEBI" id="CHEBI:18420"/>
        <label>2</label>
    </ligand>
</feature>
<feature type="binding site" evidence="1">
    <location>
        <position position="194"/>
    </location>
    <ligand>
        <name>Mg(2+)</name>
        <dbReference type="ChEBI" id="CHEBI:18420"/>
        <label>1</label>
    </ligand>
</feature>
<feature type="binding site" evidence="1">
    <location>
        <position position="226"/>
    </location>
    <ligand>
        <name>Mg(2+)</name>
        <dbReference type="ChEBI" id="CHEBI:18420"/>
        <label>2</label>
    </ligand>
</feature>
<feature type="binding site" evidence="1">
    <location>
        <position position="230"/>
    </location>
    <ligand>
        <name>Mg(2+)</name>
        <dbReference type="ChEBI" id="CHEBI:18420"/>
        <label>2</label>
    </ligand>
</feature>
<feature type="binding site" evidence="1">
    <location>
        <position position="251"/>
    </location>
    <ligand>
        <name>substrate</name>
    </ligand>
</feature>
<protein>
    <recommendedName>
        <fullName evidence="1">Ketol-acid reductoisomerase (NADP(+))</fullName>
        <shortName evidence="1">KARI</shortName>
        <ecNumber evidence="1">1.1.1.86</ecNumber>
    </recommendedName>
    <alternativeName>
        <fullName evidence="1">Acetohydroxy-acid isomeroreductase</fullName>
        <shortName evidence="1">AHIR</shortName>
    </alternativeName>
    <alternativeName>
        <fullName evidence="1">Alpha-keto-beta-hydroxylacyl reductoisomerase</fullName>
    </alternativeName>
    <alternativeName>
        <fullName evidence="1">Ketol-acid reductoisomerase type 1</fullName>
    </alternativeName>
    <alternativeName>
        <fullName evidence="1">Ketol-acid reductoisomerase type I</fullName>
    </alternativeName>
</protein>
<dbReference type="EC" id="1.1.1.86" evidence="1"/>
<dbReference type="EMBL" id="CP001338">
    <property type="protein sequence ID" value="ACL15476.1"/>
    <property type="molecule type" value="Genomic_DNA"/>
</dbReference>
<dbReference type="RefSeq" id="WP_012616795.1">
    <property type="nucleotide sequence ID" value="NC_011832.1"/>
</dbReference>
<dbReference type="SMR" id="B8GIC5"/>
<dbReference type="STRING" id="521011.Mpal_0082"/>
<dbReference type="GeneID" id="7272252"/>
<dbReference type="KEGG" id="mpl:Mpal_0082"/>
<dbReference type="eggNOG" id="arCOG04465">
    <property type="taxonomic scope" value="Archaea"/>
</dbReference>
<dbReference type="HOGENOM" id="CLU_033821_0_1_2"/>
<dbReference type="UniPathway" id="UPA00047">
    <property type="reaction ID" value="UER00056"/>
</dbReference>
<dbReference type="UniPathway" id="UPA00049">
    <property type="reaction ID" value="UER00060"/>
</dbReference>
<dbReference type="Proteomes" id="UP000002457">
    <property type="component" value="Chromosome"/>
</dbReference>
<dbReference type="GO" id="GO:0004455">
    <property type="term" value="F:ketol-acid reductoisomerase activity"/>
    <property type="evidence" value="ECO:0007669"/>
    <property type="project" value="UniProtKB-UniRule"/>
</dbReference>
<dbReference type="GO" id="GO:0000287">
    <property type="term" value="F:magnesium ion binding"/>
    <property type="evidence" value="ECO:0007669"/>
    <property type="project" value="UniProtKB-UniRule"/>
</dbReference>
<dbReference type="GO" id="GO:0050661">
    <property type="term" value="F:NADP binding"/>
    <property type="evidence" value="ECO:0007669"/>
    <property type="project" value="InterPro"/>
</dbReference>
<dbReference type="GO" id="GO:0009097">
    <property type="term" value="P:isoleucine biosynthetic process"/>
    <property type="evidence" value="ECO:0007669"/>
    <property type="project" value="UniProtKB-UniRule"/>
</dbReference>
<dbReference type="GO" id="GO:0009099">
    <property type="term" value="P:L-valine biosynthetic process"/>
    <property type="evidence" value="ECO:0007669"/>
    <property type="project" value="UniProtKB-UniRule"/>
</dbReference>
<dbReference type="FunFam" id="3.40.50.720:FF:000023">
    <property type="entry name" value="Ketol-acid reductoisomerase (NADP(+))"/>
    <property type="match status" value="1"/>
</dbReference>
<dbReference type="Gene3D" id="6.10.240.10">
    <property type="match status" value="1"/>
</dbReference>
<dbReference type="Gene3D" id="3.40.50.720">
    <property type="entry name" value="NAD(P)-binding Rossmann-like Domain"/>
    <property type="match status" value="1"/>
</dbReference>
<dbReference type="HAMAP" id="MF_00435">
    <property type="entry name" value="IlvC"/>
    <property type="match status" value="1"/>
</dbReference>
<dbReference type="InterPro" id="IPR008927">
    <property type="entry name" value="6-PGluconate_DH-like_C_sf"/>
</dbReference>
<dbReference type="InterPro" id="IPR013023">
    <property type="entry name" value="KARI"/>
</dbReference>
<dbReference type="InterPro" id="IPR000506">
    <property type="entry name" value="KARI_C"/>
</dbReference>
<dbReference type="InterPro" id="IPR013116">
    <property type="entry name" value="KARI_N"/>
</dbReference>
<dbReference type="InterPro" id="IPR014359">
    <property type="entry name" value="KARI_prok"/>
</dbReference>
<dbReference type="InterPro" id="IPR036291">
    <property type="entry name" value="NAD(P)-bd_dom_sf"/>
</dbReference>
<dbReference type="NCBIfam" id="TIGR00465">
    <property type="entry name" value="ilvC"/>
    <property type="match status" value="1"/>
</dbReference>
<dbReference type="NCBIfam" id="NF004017">
    <property type="entry name" value="PRK05479.1"/>
    <property type="match status" value="1"/>
</dbReference>
<dbReference type="NCBIfam" id="NF009940">
    <property type="entry name" value="PRK13403.1"/>
    <property type="match status" value="1"/>
</dbReference>
<dbReference type="PANTHER" id="PTHR21371">
    <property type="entry name" value="KETOL-ACID REDUCTOISOMERASE, MITOCHONDRIAL"/>
    <property type="match status" value="1"/>
</dbReference>
<dbReference type="PANTHER" id="PTHR21371:SF1">
    <property type="entry name" value="KETOL-ACID REDUCTOISOMERASE, MITOCHONDRIAL"/>
    <property type="match status" value="1"/>
</dbReference>
<dbReference type="Pfam" id="PF01450">
    <property type="entry name" value="KARI_C"/>
    <property type="match status" value="1"/>
</dbReference>
<dbReference type="Pfam" id="PF07991">
    <property type="entry name" value="KARI_N"/>
    <property type="match status" value="1"/>
</dbReference>
<dbReference type="PIRSF" id="PIRSF000116">
    <property type="entry name" value="IlvC_gammaproteo"/>
    <property type="match status" value="1"/>
</dbReference>
<dbReference type="SUPFAM" id="SSF48179">
    <property type="entry name" value="6-phosphogluconate dehydrogenase C-terminal domain-like"/>
    <property type="match status" value="1"/>
</dbReference>
<dbReference type="SUPFAM" id="SSF51735">
    <property type="entry name" value="NAD(P)-binding Rossmann-fold domains"/>
    <property type="match status" value="1"/>
</dbReference>
<dbReference type="PROSITE" id="PS51851">
    <property type="entry name" value="KARI_C"/>
    <property type="match status" value="1"/>
</dbReference>
<dbReference type="PROSITE" id="PS51850">
    <property type="entry name" value="KARI_N"/>
    <property type="match status" value="1"/>
</dbReference>
<gene>
    <name evidence="1" type="primary">ilvC</name>
    <name type="ordered locus">Mpal_0082</name>
</gene>
<organism>
    <name type="scientific">Methanosphaerula palustris (strain ATCC BAA-1556 / DSM 19958 / E1-9c)</name>
    <dbReference type="NCBI Taxonomy" id="521011"/>
    <lineage>
        <taxon>Archaea</taxon>
        <taxon>Methanobacteriati</taxon>
        <taxon>Methanobacteriota</taxon>
        <taxon>Stenosarchaea group</taxon>
        <taxon>Methanomicrobia</taxon>
        <taxon>Methanomicrobiales</taxon>
        <taxon>Methanoregulaceae</taxon>
        <taxon>Methanosphaerula</taxon>
    </lineage>
</organism>
<keyword id="KW-0028">Amino-acid biosynthesis</keyword>
<keyword id="KW-0100">Branched-chain amino acid biosynthesis</keyword>
<keyword id="KW-0460">Magnesium</keyword>
<keyword id="KW-0479">Metal-binding</keyword>
<keyword id="KW-0521">NADP</keyword>
<keyword id="KW-0560">Oxidoreductase</keyword>
<keyword id="KW-1185">Reference proteome</keyword>
<reference key="1">
    <citation type="journal article" date="2015" name="Genome Announc.">
        <title>Complete Genome Sequence of Methanosphaerula palustris E1-9CT, a Hydrogenotrophic Methanogen Isolated from a Minerotrophic Fen Peatland.</title>
        <authorList>
            <person name="Cadillo-Quiroz H."/>
            <person name="Browne P."/>
            <person name="Kyrpides N."/>
            <person name="Woyke T."/>
            <person name="Goodwin L."/>
            <person name="Detter C."/>
            <person name="Yavitt J.B."/>
            <person name="Zinder S.H."/>
        </authorList>
    </citation>
    <scope>NUCLEOTIDE SEQUENCE [LARGE SCALE GENOMIC DNA]</scope>
    <source>
        <strain>ATCC BAA-1556 / DSM 19958 / E1-9c</strain>
    </source>
</reference>
<name>ILVC_METPE</name>
<evidence type="ECO:0000255" key="1">
    <source>
        <dbReference type="HAMAP-Rule" id="MF_00435"/>
    </source>
</evidence>
<evidence type="ECO:0000255" key="2">
    <source>
        <dbReference type="PROSITE-ProRule" id="PRU01197"/>
    </source>
</evidence>
<evidence type="ECO:0000255" key="3">
    <source>
        <dbReference type="PROSITE-ProRule" id="PRU01198"/>
    </source>
</evidence>